<name>PSBN_CHAVU</name>
<evidence type="ECO:0000255" key="1">
    <source>
        <dbReference type="HAMAP-Rule" id="MF_00293"/>
    </source>
</evidence>
<comment type="function">
    <text evidence="1">May play a role in photosystem I and II biogenesis.</text>
</comment>
<comment type="subcellular location">
    <subcellularLocation>
        <location evidence="1">Plastid</location>
        <location evidence="1">Chloroplast thylakoid membrane</location>
        <topology evidence="1">Single-pass membrane protein</topology>
    </subcellularLocation>
</comment>
<comment type="similarity">
    <text evidence="1">Belongs to the PsbN family.</text>
</comment>
<comment type="caution">
    <text evidence="1">Originally thought to be a component of PSII; based on experiments in Synechocystis, N.tabacum and barley, and its absence from PSII in T.elongatus and T.vulcanus, this is probably not true.</text>
</comment>
<organism>
    <name type="scientific">Chara vulgaris</name>
    <name type="common">Common stonewort</name>
    <dbReference type="NCBI Taxonomy" id="55564"/>
    <lineage>
        <taxon>Eukaryota</taxon>
        <taxon>Viridiplantae</taxon>
        <taxon>Streptophyta</taxon>
        <taxon>Charophyceae</taxon>
        <taxon>Charales</taxon>
        <taxon>Characeae</taxon>
        <taxon>Chara</taxon>
    </lineage>
</organism>
<proteinExistence type="inferred from homology"/>
<gene>
    <name evidence="1" type="primary">psbN</name>
</gene>
<accession>Q1ACH3</accession>
<feature type="chain" id="PRO_0000276264" description="Protein PsbN">
    <location>
        <begin position="1"/>
        <end position="43"/>
    </location>
</feature>
<feature type="transmembrane region" description="Helical" evidence="1">
    <location>
        <begin position="5"/>
        <end position="27"/>
    </location>
</feature>
<protein>
    <recommendedName>
        <fullName evidence="1">Protein PsbN</fullName>
    </recommendedName>
</protein>
<keyword id="KW-0150">Chloroplast</keyword>
<keyword id="KW-0472">Membrane</keyword>
<keyword id="KW-0934">Plastid</keyword>
<keyword id="KW-0793">Thylakoid</keyword>
<keyword id="KW-0812">Transmembrane</keyword>
<keyword id="KW-1133">Transmembrane helix</keyword>
<geneLocation type="chloroplast"/>
<sequence length="43" mass="4871">METATFITIFISCLLVSVTGYALYTAFGKPSKQLRDPFEEHED</sequence>
<reference key="1">
    <citation type="journal article" date="2006" name="Mol. Biol. Evol.">
        <title>The chloroplast genome sequence of Chara vulgaris sheds new light into the closest green algal relatives of land plants.</title>
        <authorList>
            <person name="Turmel M."/>
            <person name="Otis C."/>
            <person name="Lemieux C."/>
        </authorList>
    </citation>
    <scope>NUCLEOTIDE SEQUENCE [LARGE SCALE GENOMIC DNA]</scope>
</reference>
<dbReference type="EMBL" id="DQ229107">
    <property type="protein sequence ID" value="ABA61955.1"/>
    <property type="molecule type" value="Genomic_DNA"/>
</dbReference>
<dbReference type="RefSeq" id="YP_635774.1">
    <property type="nucleotide sequence ID" value="NC_008097.1"/>
</dbReference>
<dbReference type="SMR" id="Q1ACH3"/>
<dbReference type="GeneID" id="4100321"/>
<dbReference type="GO" id="GO:0009535">
    <property type="term" value="C:chloroplast thylakoid membrane"/>
    <property type="evidence" value="ECO:0007669"/>
    <property type="project" value="UniProtKB-SubCell"/>
</dbReference>
<dbReference type="GO" id="GO:0015979">
    <property type="term" value="P:photosynthesis"/>
    <property type="evidence" value="ECO:0007669"/>
    <property type="project" value="InterPro"/>
</dbReference>
<dbReference type="HAMAP" id="MF_00293">
    <property type="entry name" value="PSII_PsbN"/>
    <property type="match status" value="1"/>
</dbReference>
<dbReference type="InterPro" id="IPR003398">
    <property type="entry name" value="PSII_PsbN"/>
</dbReference>
<dbReference type="PANTHER" id="PTHR35326">
    <property type="entry name" value="PROTEIN PSBN"/>
    <property type="match status" value="1"/>
</dbReference>
<dbReference type="PANTHER" id="PTHR35326:SF3">
    <property type="entry name" value="PROTEIN PSBN"/>
    <property type="match status" value="1"/>
</dbReference>
<dbReference type="Pfam" id="PF02468">
    <property type="entry name" value="PsbN"/>
    <property type="match status" value="1"/>
</dbReference>